<name>TOS6_YEAS2</name>
<keyword id="KW-0134">Cell wall</keyword>
<keyword id="KW-0325">Glycoprotein</keyword>
<keyword id="KW-0336">GPI-anchor</keyword>
<keyword id="KW-0449">Lipoprotein</keyword>
<keyword id="KW-0472">Membrane</keyword>
<keyword id="KW-0964">Secreted</keyword>
<keyword id="KW-0732">Signal</keyword>
<reference key="1">
    <citation type="journal article" date="2009" name="Genome Res.">
        <title>Genome structure of a Saccharomyces cerevisiae strain widely used in bioethanol production.</title>
        <authorList>
            <person name="Argueso J.L."/>
            <person name="Carazzolle M.F."/>
            <person name="Mieczkowski P.A."/>
            <person name="Duarte F.M."/>
            <person name="Netto O.V.C."/>
            <person name="Missawa S.K."/>
            <person name="Galzerani F."/>
            <person name="Costa G.G.L."/>
            <person name="Vidal R.O."/>
            <person name="Noronha M.F."/>
            <person name="Dominska M."/>
            <person name="Andrietta M.G.S."/>
            <person name="Andrietta S.R."/>
            <person name="Cunha A.F."/>
            <person name="Gomes L.H."/>
            <person name="Tavares F.C.A."/>
            <person name="Alcarde A.R."/>
            <person name="Dietrich F.S."/>
            <person name="McCusker J.H."/>
            <person name="Petes T.D."/>
            <person name="Pereira G.A.G."/>
        </authorList>
    </citation>
    <scope>NUCLEOTIDE SEQUENCE [LARGE SCALE GENOMIC DNA]</scope>
    <source>
        <strain>JAY291</strain>
    </source>
</reference>
<proteinExistence type="inferred from homology"/>
<organism>
    <name type="scientific">Saccharomyces cerevisiae (strain JAY291)</name>
    <name type="common">Baker's yeast</name>
    <dbReference type="NCBI Taxonomy" id="574961"/>
    <lineage>
        <taxon>Eukaryota</taxon>
        <taxon>Fungi</taxon>
        <taxon>Dikarya</taxon>
        <taxon>Ascomycota</taxon>
        <taxon>Saccharomycotina</taxon>
        <taxon>Saccharomycetes</taxon>
        <taxon>Saccharomycetales</taxon>
        <taxon>Saccharomycetaceae</taxon>
        <taxon>Saccharomyces</taxon>
    </lineage>
</organism>
<protein>
    <recommendedName>
        <fullName>Protein TOS6</fullName>
    </recommendedName>
</protein>
<accession>C7GS61</accession>
<gene>
    <name type="primary">TOS6</name>
    <name type="ORF">C1Q_03211</name>
</gene>
<feature type="signal peptide" evidence="2">
    <location>
        <begin position="1"/>
        <end position="18"/>
    </location>
</feature>
<feature type="chain" id="PRO_0000402238" description="Protein TOS6">
    <location>
        <begin position="19"/>
        <end position="80"/>
    </location>
</feature>
<feature type="propeptide" id="PRO_0000402239" description="Removed in mature form" evidence="2">
    <location>
        <begin position="81"/>
        <end position="102"/>
    </location>
</feature>
<feature type="lipid moiety-binding region" description="GPI-anchor amidated glycine" evidence="2">
    <location>
        <position position="80"/>
    </location>
</feature>
<feature type="glycosylation site" description="N-linked (GlcNAc...) asparagine" evidence="2">
    <location>
        <position position="69"/>
    </location>
</feature>
<sequence>MKFSTLSTVAAIAAFASADSTSDGVTYVDVTTTPQSTTSMVSTVKTTSTPYTTSTIATLSTKSISSQANTTTHEISTYVGAAVKGSVAGMGAIMGAAAFALL</sequence>
<comment type="subcellular location">
    <subcellularLocation>
        <location evidence="3">Secreted</location>
        <location evidence="3">Cell wall</location>
    </subcellularLocation>
    <subcellularLocation>
        <location evidence="3">Membrane</location>
        <topology evidence="3">Lipid-anchor</topology>
        <topology evidence="3">GPI-anchor</topology>
    </subcellularLocation>
</comment>
<comment type="PTM">
    <text evidence="1">The GPI-anchor is attached to the protein in the endoplasmic reticulum and serves to target the protein to the cell surface. There, the glucosamine-inositol phospholipid moiety is cleaved off and the GPI-modified mannoprotein is covalently attached via its lipidless GPI glycan remnant to the 1,6-beta-glucan of the outer cell wall layer (By similarity).</text>
</comment>
<comment type="similarity">
    <text evidence="3">Belongs to the TOS6 family.</text>
</comment>
<dbReference type="EMBL" id="ACFL01000171">
    <property type="protein sequence ID" value="EEU06369.1"/>
    <property type="molecule type" value="Genomic_DNA"/>
</dbReference>
<dbReference type="GlyCosmos" id="C7GS61">
    <property type="glycosylation" value="1 site, No reported glycans"/>
</dbReference>
<dbReference type="Proteomes" id="UP000008073">
    <property type="component" value="Unassembled WGS sequence"/>
</dbReference>
<dbReference type="GO" id="GO:0005576">
    <property type="term" value="C:extracellular region"/>
    <property type="evidence" value="ECO:0007669"/>
    <property type="project" value="UniProtKB-KW"/>
</dbReference>
<dbReference type="GO" id="GO:0098552">
    <property type="term" value="C:side of membrane"/>
    <property type="evidence" value="ECO:0007669"/>
    <property type="project" value="UniProtKB-KW"/>
</dbReference>
<dbReference type="CDD" id="cd22955">
    <property type="entry name" value="TOS6"/>
    <property type="match status" value="1"/>
</dbReference>
<evidence type="ECO:0000250" key="1"/>
<evidence type="ECO:0000255" key="2"/>
<evidence type="ECO:0000305" key="3"/>